<protein>
    <recommendedName>
        <fullName evidence="1">Lon protease</fullName>
        <ecNumber evidence="1">3.4.21.53</ecNumber>
    </recommendedName>
    <alternativeName>
        <fullName evidence="1">ATP-dependent protease La</fullName>
    </alternativeName>
</protein>
<proteinExistence type="inferred from homology"/>
<feature type="chain" id="PRO_0000396578" description="Lon protease">
    <location>
        <begin position="1"/>
        <end position="809"/>
    </location>
</feature>
<feature type="domain" description="Lon N-terminal" evidence="3">
    <location>
        <begin position="42"/>
        <end position="242"/>
    </location>
</feature>
<feature type="domain" description="Lon proteolytic" evidence="2">
    <location>
        <begin position="629"/>
        <end position="809"/>
    </location>
</feature>
<feature type="active site" evidence="1">
    <location>
        <position position="716"/>
    </location>
</feature>
<feature type="active site" evidence="1">
    <location>
        <position position="759"/>
    </location>
</feature>
<feature type="binding site" evidence="1">
    <location>
        <begin position="395"/>
        <end position="402"/>
    </location>
    <ligand>
        <name>ATP</name>
        <dbReference type="ChEBI" id="CHEBI:30616"/>
    </ligand>
</feature>
<gene>
    <name evidence="1" type="primary">lon</name>
    <name type="ordered locus">Mmc1_0534</name>
</gene>
<organism>
    <name type="scientific">Magnetococcus marinus (strain ATCC BAA-1437 / JCM 17883 / MC-1)</name>
    <dbReference type="NCBI Taxonomy" id="156889"/>
    <lineage>
        <taxon>Bacteria</taxon>
        <taxon>Pseudomonadati</taxon>
        <taxon>Pseudomonadota</taxon>
        <taxon>Alphaproteobacteria</taxon>
        <taxon>Magnetococcales</taxon>
        <taxon>Magnetococcaceae</taxon>
        <taxon>Magnetococcus</taxon>
    </lineage>
</organism>
<evidence type="ECO:0000255" key="1">
    <source>
        <dbReference type="HAMAP-Rule" id="MF_01973"/>
    </source>
</evidence>
<evidence type="ECO:0000255" key="2">
    <source>
        <dbReference type="PROSITE-ProRule" id="PRU01122"/>
    </source>
</evidence>
<evidence type="ECO:0000255" key="3">
    <source>
        <dbReference type="PROSITE-ProRule" id="PRU01123"/>
    </source>
</evidence>
<reference key="1">
    <citation type="journal article" date="2009" name="Appl. Environ. Microbiol.">
        <title>Complete genome sequence of the chemolithoautotrophic marine magnetotactic coccus strain MC-1.</title>
        <authorList>
            <person name="Schubbe S."/>
            <person name="Williams T.J."/>
            <person name="Xie G."/>
            <person name="Kiss H.E."/>
            <person name="Brettin T.S."/>
            <person name="Martinez D."/>
            <person name="Ross C.A."/>
            <person name="Schuler D."/>
            <person name="Cox B.L."/>
            <person name="Nealson K.H."/>
            <person name="Bazylinski D.A."/>
        </authorList>
    </citation>
    <scope>NUCLEOTIDE SEQUENCE [LARGE SCALE GENOMIC DNA]</scope>
    <source>
        <strain>ATCC BAA-1437 / JCM 17883 / MC-1</strain>
    </source>
</reference>
<name>LON_MAGMM</name>
<accession>A0L516</accession>
<sequence length="809" mass="89847">MSEQRSDEPEVVDAIIEDQQGAQATTDATPPVRIENSLPTELVIYPLGGRPFFPGMLTPIQVEGSPYYETIKKAMDSHGRLFGILASHAEDGQEVFDANQLFGIGTVVRILEASVNEEAKQIKLLAEGLWRFEVRDVVSVGPPIVAQVTHHNNPVSVVDTDALKPYTMAVINTLKEILKYDSLYQEQVKMFLSRHNFSEPDRLADFVASMTSSSREELQEVLETLPIMARLEKVLTLLKKELEVVKLQNKIQRQVEEGIAEHQRQFFLREQLKEIQKELGITKDDRTAEIDRFRERLEKLTLSEEAEQKIEEELDKLAILETGSSEYGVTRNYVDWLTSLPWGVHSTDKLNIARARRILDRDHDGLEDVKERILEFLAVGKLKGEIGGSIILLVGPPGVGKTSIGRSVATAVGREFYRFSVGGMRDEAEIKGHRRTYVGAMPGKFVQAIKHTKVANPLIMLDEVDKIGASYQGDPASALLEVLDPEQNSEFLDHYMDVRFDLSKVLFICTANQLDTIPRPLLDRMEVIRLSGYITSEKVRIARNHLLPKQLEKNGLDKSQLRVSNGALREIIEGYAREAGVRRLEQKIGAIARKVAVKVLEEAELPISVGQNDLDSYLGKPDFREEKPLTGVGIVTGLAWTALGGATLDIESAQTSTEGNTLLLTGQLGDVMKESARIAFSFLQSNVEKLGGKSERLKGNIHLHVPEGATPKDGPSAGITIATALLSLARTQPLPRRLAMTGEITLTGSVLAVGGVREKVIAARRVGIRELIIPEACRKDYDEVPEHIREGFTVHFVKKYAEVAKLVFG</sequence>
<keyword id="KW-0067">ATP-binding</keyword>
<keyword id="KW-0963">Cytoplasm</keyword>
<keyword id="KW-0378">Hydrolase</keyword>
<keyword id="KW-0547">Nucleotide-binding</keyword>
<keyword id="KW-0645">Protease</keyword>
<keyword id="KW-1185">Reference proteome</keyword>
<keyword id="KW-0720">Serine protease</keyword>
<keyword id="KW-0346">Stress response</keyword>
<comment type="function">
    <text evidence="1">ATP-dependent serine protease that mediates the selective degradation of mutant and abnormal proteins as well as certain short-lived regulatory proteins. Required for cellular homeostasis and for survival from DNA damage and developmental changes induced by stress. Degrades polypeptides processively to yield small peptide fragments that are 5 to 10 amino acids long. Binds to DNA in a double-stranded, site-specific manner.</text>
</comment>
<comment type="catalytic activity">
    <reaction evidence="1">
        <text>Hydrolysis of proteins in presence of ATP.</text>
        <dbReference type="EC" id="3.4.21.53"/>
    </reaction>
</comment>
<comment type="subunit">
    <text evidence="1">Homohexamer. Organized in a ring with a central cavity.</text>
</comment>
<comment type="subcellular location">
    <subcellularLocation>
        <location evidence="1">Cytoplasm</location>
    </subcellularLocation>
</comment>
<comment type="induction">
    <text evidence="1">By heat shock.</text>
</comment>
<comment type="similarity">
    <text evidence="1">Belongs to the peptidase S16 family.</text>
</comment>
<dbReference type="EC" id="3.4.21.53" evidence="1"/>
<dbReference type="EMBL" id="CP000471">
    <property type="protein sequence ID" value="ABK43059.1"/>
    <property type="molecule type" value="Genomic_DNA"/>
</dbReference>
<dbReference type="RefSeq" id="WP_011712226.1">
    <property type="nucleotide sequence ID" value="NC_008576.1"/>
</dbReference>
<dbReference type="SMR" id="A0L516"/>
<dbReference type="STRING" id="156889.Mmc1_0534"/>
<dbReference type="KEGG" id="mgm:Mmc1_0534"/>
<dbReference type="eggNOG" id="COG0466">
    <property type="taxonomic scope" value="Bacteria"/>
</dbReference>
<dbReference type="HOGENOM" id="CLU_004109_4_3_5"/>
<dbReference type="OrthoDB" id="9803599at2"/>
<dbReference type="Proteomes" id="UP000002586">
    <property type="component" value="Chromosome"/>
</dbReference>
<dbReference type="GO" id="GO:0005737">
    <property type="term" value="C:cytoplasm"/>
    <property type="evidence" value="ECO:0007669"/>
    <property type="project" value="UniProtKB-SubCell"/>
</dbReference>
<dbReference type="GO" id="GO:0005524">
    <property type="term" value="F:ATP binding"/>
    <property type="evidence" value="ECO:0007669"/>
    <property type="project" value="UniProtKB-UniRule"/>
</dbReference>
<dbReference type="GO" id="GO:0016887">
    <property type="term" value="F:ATP hydrolysis activity"/>
    <property type="evidence" value="ECO:0007669"/>
    <property type="project" value="UniProtKB-UniRule"/>
</dbReference>
<dbReference type="GO" id="GO:0004176">
    <property type="term" value="F:ATP-dependent peptidase activity"/>
    <property type="evidence" value="ECO:0007669"/>
    <property type="project" value="UniProtKB-UniRule"/>
</dbReference>
<dbReference type="GO" id="GO:0043565">
    <property type="term" value="F:sequence-specific DNA binding"/>
    <property type="evidence" value="ECO:0007669"/>
    <property type="project" value="UniProtKB-UniRule"/>
</dbReference>
<dbReference type="GO" id="GO:0004252">
    <property type="term" value="F:serine-type endopeptidase activity"/>
    <property type="evidence" value="ECO:0007669"/>
    <property type="project" value="UniProtKB-UniRule"/>
</dbReference>
<dbReference type="GO" id="GO:0034605">
    <property type="term" value="P:cellular response to heat"/>
    <property type="evidence" value="ECO:0007669"/>
    <property type="project" value="UniProtKB-UniRule"/>
</dbReference>
<dbReference type="GO" id="GO:0006515">
    <property type="term" value="P:protein quality control for misfolded or incompletely synthesized proteins"/>
    <property type="evidence" value="ECO:0007669"/>
    <property type="project" value="UniProtKB-UniRule"/>
</dbReference>
<dbReference type="CDD" id="cd19500">
    <property type="entry name" value="RecA-like_Lon"/>
    <property type="match status" value="1"/>
</dbReference>
<dbReference type="FunFam" id="3.40.50.300:FF:000021">
    <property type="entry name" value="Lon protease homolog"/>
    <property type="match status" value="1"/>
</dbReference>
<dbReference type="FunFam" id="1.20.5.5270:FF:000001">
    <property type="entry name" value="Lon protease homolog, mitochondrial"/>
    <property type="match status" value="1"/>
</dbReference>
<dbReference type="Gene3D" id="1.10.8.60">
    <property type="match status" value="1"/>
</dbReference>
<dbReference type="Gene3D" id="1.20.5.5270">
    <property type="match status" value="1"/>
</dbReference>
<dbReference type="Gene3D" id="1.20.58.1480">
    <property type="match status" value="1"/>
</dbReference>
<dbReference type="Gene3D" id="3.30.230.10">
    <property type="match status" value="1"/>
</dbReference>
<dbReference type="Gene3D" id="2.30.130.40">
    <property type="entry name" value="LON domain-like"/>
    <property type="match status" value="1"/>
</dbReference>
<dbReference type="Gene3D" id="3.40.50.300">
    <property type="entry name" value="P-loop containing nucleotide triphosphate hydrolases"/>
    <property type="match status" value="1"/>
</dbReference>
<dbReference type="HAMAP" id="MF_01973">
    <property type="entry name" value="lon_bact"/>
    <property type="match status" value="1"/>
</dbReference>
<dbReference type="InterPro" id="IPR003593">
    <property type="entry name" value="AAA+_ATPase"/>
</dbReference>
<dbReference type="InterPro" id="IPR003959">
    <property type="entry name" value="ATPase_AAA_core"/>
</dbReference>
<dbReference type="InterPro" id="IPR027543">
    <property type="entry name" value="Lon_bac"/>
</dbReference>
<dbReference type="InterPro" id="IPR004815">
    <property type="entry name" value="Lon_bac/euk-typ"/>
</dbReference>
<dbReference type="InterPro" id="IPR054594">
    <property type="entry name" value="Lon_lid"/>
</dbReference>
<dbReference type="InterPro" id="IPR008269">
    <property type="entry name" value="Lon_proteolytic"/>
</dbReference>
<dbReference type="InterPro" id="IPR027065">
    <property type="entry name" value="Lon_Prtase"/>
</dbReference>
<dbReference type="InterPro" id="IPR003111">
    <property type="entry name" value="Lon_prtase_N"/>
</dbReference>
<dbReference type="InterPro" id="IPR046336">
    <property type="entry name" value="Lon_prtase_N_sf"/>
</dbReference>
<dbReference type="InterPro" id="IPR027417">
    <property type="entry name" value="P-loop_NTPase"/>
</dbReference>
<dbReference type="InterPro" id="IPR008268">
    <property type="entry name" value="Peptidase_S16_AS"/>
</dbReference>
<dbReference type="InterPro" id="IPR015947">
    <property type="entry name" value="PUA-like_sf"/>
</dbReference>
<dbReference type="InterPro" id="IPR020568">
    <property type="entry name" value="Ribosomal_Su5_D2-typ_SF"/>
</dbReference>
<dbReference type="InterPro" id="IPR014721">
    <property type="entry name" value="Ribsml_uS5_D2-typ_fold_subgr"/>
</dbReference>
<dbReference type="NCBIfam" id="TIGR00763">
    <property type="entry name" value="lon"/>
    <property type="match status" value="1"/>
</dbReference>
<dbReference type="PANTHER" id="PTHR43718">
    <property type="entry name" value="LON PROTEASE"/>
    <property type="match status" value="1"/>
</dbReference>
<dbReference type="PANTHER" id="PTHR43718:SF2">
    <property type="entry name" value="LON PROTEASE HOMOLOG, MITOCHONDRIAL"/>
    <property type="match status" value="1"/>
</dbReference>
<dbReference type="Pfam" id="PF00004">
    <property type="entry name" value="AAA"/>
    <property type="match status" value="1"/>
</dbReference>
<dbReference type="Pfam" id="PF05362">
    <property type="entry name" value="Lon_C"/>
    <property type="match status" value="1"/>
</dbReference>
<dbReference type="Pfam" id="PF22667">
    <property type="entry name" value="Lon_lid"/>
    <property type="match status" value="1"/>
</dbReference>
<dbReference type="Pfam" id="PF02190">
    <property type="entry name" value="LON_substr_bdg"/>
    <property type="match status" value="1"/>
</dbReference>
<dbReference type="PIRSF" id="PIRSF001174">
    <property type="entry name" value="Lon_proteas"/>
    <property type="match status" value="1"/>
</dbReference>
<dbReference type="PRINTS" id="PR00830">
    <property type="entry name" value="ENDOLAPTASE"/>
</dbReference>
<dbReference type="SMART" id="SM00382">
    <property type="entry name" value="AAA"/>
    <property type="match status" value="1"/>
</dbReference>
<dbReference type="SMART" id="SM00464">
    <property type="entry name" value="LON"/>
    <property type="match status" value="1"/>
</dbReference>
<dbReference type="SUPFAM" id="SSF52540">
    <property type="entry name" value="P-loop containing nucleoside triphosphate hydrolases"/>
    <property type="match status" value="1"/>
</dbReference>
<dbReference type="SUPFAM" id="SSF88697">
    <property type="entry name" value="PUA domain-like"/>
    <property type="match status" value="1"/>
</dbReference>
<dbReference type="SUPFAM" id="SSF54211">
    <property type="entry name" value="Ribosomal protein S5 domain 2-like"/>
    <property type="match status" value="1"/>
</dbReference>
<dbReference type="PROSITE" id="PS51787">
    <property type="entry name" value="LON_N"/>
    <property type="match status" value="1"/>
</dbReference>
<dbReference type="PROSITE" id="PS51786">
    <property type="entry name" value="LON_PROTEOLYTIC"/>
    <property type="match status" value="1"/>
</dbReference>
<dbReference type="PROSITE" id="PS01046">
    <property type="entry name" value="LON_SER"/>
    <property type="match status" value="1"/>
</dbReference>